<comment type="function">
    <text evidence="1">D-aminoacyl-tRNA deacylase with broad substrate specificity. By recycling D-aminoacyl-tRNA to D-amino acids and free tRNA molecules, this enzyme counteracts the toxicity associated with the formation of D-aminoacyl-tRNA entities in vivo.</text>
</comment>
<comment type="catalytic activity">
    <reaction evidence="1">
        <text>a D-aminoacyl-tRNA + H2O = a tRNA + a D-alpha-amino acid + H(+)</text>
        <dbReference type="Rhea" id="RHEA:13953"/>
        <dbReference type="Rhea" id="RHEA-COMP:10123"/>
        <dbReference type="Rhea" id="RHEA-COMP:10124"/>
        <dbReference type="ChEBI" id="CHEBI:15377"/>
        <dbReference type="ChEBI" id="CHEBI:15378"/>
        <dbReference type="ChEBI" id="CHEBI:59871"/>
        <dbReference type="ChEBI" id="CHEBI:78442"/>
        <dbReference type="ChEBI" id="CHEBI:79333"/>
        <dbReference type="EC" id="3.1.1.96"/>
    </reaction>
</comment>
<comment type="catalytic activity">
    <reaction evidence="1">
        <text>glycyl-tRNA(Ala) + H2O = tRNA(Ala) + glycine + H(+)</text>
        <dbReference type="Rhea" id="RHEA:53744"/>
        <dbReference type="Rhea" id="RHEA-COMP:9657"/>
        <dbReference type="Rhea" id="RHEA-COMP:13640"/>
        <dbReference type="ChEBI" id="CHEBI:15377"/>
        <dbReference type="ChEBI" id="CHEBI:15378"/>
        <dbReference type="ChEBI" id="CHEBI:57305"/>
        <dbReference type="ChEBI" id="CHEBI:78442"/>
        <dbReference type="ChEBI" id="CHEBI:78522"/>
        <dbReference type="EC" id="3.1.1.96"/>
    </reaction>
</comment>
<comment type="cofactor">
    <cofactor evidence="1">
        <name>Zn(2+)</name>
        <dbReference type="ChEBI" id="CHEBI:29105"/>
    </cofactor>
    <text evidence="1">Binds 2 Zn(2+) ions per subunit.</text>
</comment>
<comment type="subunit">
    <text evidence="1">Monomer.</text>
</comment>
<comment type="similarity">
    <text evidence="1">Belongs to the DtdA deacylase family.</text>
</comment>
<gene>
    <name evidence="1" type="primary">dtdA</name>
    <name type="ordered locus">Igni_1152</name>
</gene>
<name>DTDA_IGNH4</name>
<proteinExistence type="inferred from homology"/>
<sequence>MKVTVVYYPGDPAAKGAAEALEREYGIKALELPEDPPFFDFNSLAGDAFIVLSRHSSEKRVKAFTVHHTGNFGEAKLGGEPKRLGVAYPSLACSLLRAMNAFRREGYDVTYEATHHGPTSDKPLVFAEIGSVKEDWEDPANHEVLAKAVASWEEHRCEAPKAVWVGGPHYSKRATKRCLEGEACFGHIAPKYALDHLDEDLLRQMVERSFERPERAYVEKKSLKSELRLRVVKALEDLGLEVLVV</sequence>
<feature type="chain" id="PRO_0000345212" description="D-aminoacyl-tRNA deacylase">
    <location>
        <begin position="1"/>
        <end position="245"/>
    </location>
</feature>
<accession>A8ABM7</accession>
<organism>
    <name type="scientific">Ignicoccus hospitalis (strain KIN4/I / DSM 18386 / JCM 14125)</name>
    <dbReference type="NCBI Taxonomy" id="453591"/>
    <lineage>
        <taxon>Archaea</taxon>
        <taxon>Thermoproteota</taxon>
        <taxon>Thermoprotei</taxon>
        <taxon>Desulfurococcales</taxon>
        <taxon>Desulfurococcaceae</taxon>
        <taxon>Ignicoccus</taxon>
    </lineage>
</organism>
<keyword id="KW-0378">Hydrolase</keyword>
<keyword id="KW-0479">Metal-binding</keyword>
<keyword id="KW-1185">Reference proteome</keyword>
<keyword id="KW-0862">Zinc</keyword>
<protein>
    <recommendedName>
        <fullName evidence="1">D-aminoacyl-tRNA deacylase</fullName>
        <ecNumber evidence="1">3.1.1.96</ecNumber>
    </recommendedName>
    <alternativeName>
        <fullName>D-tyrosyl-tRNA(Tyr) deacylase</fullName>
    </alternativeName>
</protein>
<evidence type="ECO:0000255" key="1">
    <source>
        <dbReference type="HAMAP-Rule" id="MF_00562"/>
    </source>
</evidence>
<dbReference type="EC" id="3.1.1.96" evidence="1"/>
<dbReference type="EMBL" id="CP000816">
    <property type="protein sequence ID" value="ABU82329.1"/>
    <property type="molecule type" value="Genomic_DNA"/>
</dbReference>
<dbReference type="RefSeq" id="WP_012123293.1">
    <property type="nucleotide sequence ID" value="NC_009776.1"/>
</dbReference>
<dbReference type="SMR" id="A8ABM7"/>
<dbReference type="STRING" id="453591.Igni_1152"/>
<dbReference type="GeneID" id="5563080"/>
<dbReference type="KEGG" id="iho:Igni_1152"/>
<dbReference type="eggNOG" id="arCOG01616">
    <property type="taxonomic scope" value="Archaea"/>
</dbReference>
<dbReference type="HOGENOM" id="CLU_056464_1_0_2"/>
<dbReference type="OrthoDB" id="9863at2157"/>
<dbReference type="PhylomeDB" id="A8ABM7"/>
<dbReference type="Proteomes" id="UP000000262">
    <property type="component" value="Chromosome"/>
</dbReference>
<dbReference type="GO" id="GO:0051499">
    <property type="term" value="F:D-aminoacyl-tRNA deacylase activity"/>
    <property type="evidence" value="ECO:0007669"/>
    <property type="project" value="UniProtKB-UniRule"/>
</dbReference>
<dbReference type="GO" id="GO:0008270">
    <property type="term" value="F:zinc ion binding"/>
    <property type="evidence" value="ECO:0007669"/>
    <property type="project" value="UniProtKB-UniRule"/>
</dbReference>
<dbReference type="GO" id="GO:0019478">
    <property type="term" value="P:D-amino acid catabolic process"/>
    <property type="evidence" value="ECO:0007669"/>
    <property type="project" value="UniProtKB-UniRule"/>
</dbReference>
<dbReference type="Gene3D" id="3.40.50.10700">
    <property type="entry name" value="AF0625-like"/>
    <property type="match status" value="1"/>
</dbReference>
<dbReference type="Gene3D" id="3.40.630.50">
    <property type="entry name" value="AF0625-like"/>
    <property type="match status" value="1"/>
</dbReference>
<dbReference type="HAMAP" id="MF_00562">
    <property type="entry name" value="Deacylase_DtdA"/>
    <property type="match status" value="1"/>
</dbReference>
<dbReference type="InterPro" id="IPR018033">
    <property type="entry name" value="Deacylase_DtdA_archaea"/>
</dbReference>
<dbReference type="InterPro" id="IPR007508">
    <property type="entry name" value="DtdA"/>
</dbReference>
<dbReference type="PANTHER" id="PTHR34667">
    <property type="entry name" value="D-AMINOACYL-TRNA DEACYLASE"/>
    <property type="match status" value="1"/>
</dbReference>
<dbReference type="PANTHER" id="PTHR34667:SF1">
    <property type="entry name" value="D-AMINOACYL-TRNA DEACYLASE"/>
    <property type="match status" value="1"/>
</dbReference>
<dbReference type="Pfam" id="PF04414">
    <property type="entry name" value="tRNA_deacylase"/>
    <property type="match status" value="1"/>
</dbReference>
<dbReference type="PIRSF" id="PIRSF016210">
    <property type="entry name" value="UCP016210"/>
    <property type="match status" value="1"/>
</dbReference>
<dbReference type="SUPFAM" id="SSF142535">
    <property type="entry name" value="AF0625-like"/>
    <property type="match status" value="1"/>
</dbReference>
<reference key="1">
    <citation type="journal article" date="2008" name="Genome Biol.">
        <title>A genomic analysis of the archaeal system Ignicoccus hospitalis-Nanoarchaeum equitans.</title>
        <authorList>
            <person name="Podar M."/>
            <person name="Anderson I."/>
            <person name="Makarova K.S."/>
            <person name="Elkins J.G."/>
            <person name="Ivanova N."/>
            <person name="Wall M.A."/>
            <person name="Lykidis A."/>
            <person name="Mavromatis K."/>
            <person name="Sun H."/>
            <person name="Hudson M.E."/>
            <person name="Chen W."/>
            <person name="Deciu C."/>
            <person name="Hutchison D."/>
            <person name="Eads J.R."/>
            <person name="Anderson A."/>
            <person name="Fernandes F."/>
            <person name="Szeto E."/>
            <person name="Lapidus A."/>
            <person name="Kyrpides N.C."/>
            <person name="Saier M.H. Jr."/>
            <person name="Richardson P.M."/>
            <person name="Rachel R."/>
            <person name="Huber H."/>
            <person name="Eisen J.A."/>
            <person name="Koonin E.V."/>
            <person name="Keller M."/>
            <person name="Stetter K.O."/>
        </authorList>
    </citation>
    <scope>NUCLEOTIDE SEQUENCE [LARGE SCALE GENOMIC DNA]</scope>
    <source>
        <strain>KIN4/I / DSM 18386 / JCM 14125</strain>
    </source>
</reference>